<name>RR2_EUGLO</name>
<sequence length="235" mass="27487">MFNDKIIKEMFFARLHLGHFSTKWNPKMKKYVFCKQNGKYIIDLIQTVYYLKKVCNFIKKLSIEGKKILFVSARMLIVDKLKHFANVTKSFYITEDWLGGTFTNWITTKGCIDKLNYYSVDGLKLYDSLTKRERLISRKQQSKLAKYYFGIKQMKKIPDVVFLIGQSDLKKAIGECLKLNVPTISILDTDCDPTMTNFFIPANDDSISSIFFILDFVKYYMLKGGKKISKRLVFN</sequence>
<proteinExistence type="inferred from homology"/>
<keyword id="KW-0934">Plastid</keyword>
<keyword id="KW-0687">Ribonucleoprotein</keyword>
<keyword id="KW-0689">Ribosomal protein</keyword>
<organism>
    <name type="scientific">Euglena longa</name>
    <name type="common">Euglenophycean alga</name>
    <name type="synonym">Astasia longa</name>
    <dbReference type="NCBI Taxonomy" id="3037"/>
    <lineage>
        <taxon>Eukaryota</taxon>
        <taxon>Discoba</taxon>
        <taxon>Euglenozoa</taxon>
        <taxon>Euglenida</taxon>
        <taxon>Spirocuta</taxon>
        <taxon>Euglenophyceae</taxon>
        <taxon>Euglenales</taxon>
        <taxon>Euglenaceae</taxon>
        <taxon>Euglena</taxon>
    </lineage>
</organism>
<reference key="1">
    <citation type="journal article" date="1990" name="Curr. Genet.">
        <title>Genes for ribosomal proteins are retained on the 73 kb DNA from Astasia longa that resembles Euglena chloroplast DNA.</title>
        <authorList>
            <person name="Siemeister G."/>
            <person name="Buchholz C."/>
            <person name="Hachtel W."/>
        </authorList>
    </citation>
    <scope>NUCLEOTIDE SEQUENCE [GENOMIC DNA]</scope>
    <source>
        <strain>CCAP 1204-17a</strain>
    </source>
</reference>
<reference key="2">
    <citation type="journal article" date="1994" name="Plant Physiol.">
        <title>Plastid ribosomal protein genes from the nonphotosynthetic flagellate Astasia longa.</title>
        <authorList>
            <person name="Gockel G."/>
            <person name="Baier S."/>
            <person name="Hachtel W."/>
        </authorList>
    </citation>
    <scope>NUCLEOTIDE SEQUENCE [GENOMIC DNA]</scope>
    <source>
        <strain>CCAP 1204-17a</strain>
    </source>
</reference>
<reference key="3">
    <citation type="journal article" date="2000" name="Protist">
        <title>Complete gene map of the plastid genome of the nonphotosynthetic euglenoid flagellate Astasia longa.</title>
        <authorList>
            <person name="Gockel G."/>
            <person name="Hachtel W."/>
        </authorList>
    </citation>
    <scope>NUCLEOTIDE SEQUENCE [LARGE SCALE GENOMIC DNA]</scope>
    <source>
        <strain>CCAP 1204-17a</strain>
    </source>
</reference>
<evidence type="ECO:0000305" key="1"/>
<comment type="subcellular location">
    <subcellularLocation>
        <location>Plastid</location>
    </subcellularLocation>
</comment>
<comment type="similarity">
    <text evidence="1">Belongs to the universal ribosomal protein uS2 family.</text>
</comment>
<geneLocation type="non-photosynthetic plastid"/>
<dbReference type="EMBL" id="AJ294725">
    <property type="protein sequence ID" value="CAC24580.1"/>
    <property type="molecule type" value="Genomic_DNA"/>
</dbReference>
<dbReference type="PIR" id="S14154">
    <property type="entry name" value="S14154"/>
</dbReference>
<dbReference type="RefSeq" id="NP_074969.1">
    <property type="nucleotide sequence ID" value="NC_002652.1"/>
</dbReference>
<dbReference type="SMR" id="P24352"/>
<dbReference type="GeneID" id="802545"/>
<dbReference type="GO" id="GO:0005763">
    <property type="term" value="C:mitochondrial small ribosomal subunit"/>
    <property type="evidence" value="ECO:0007669"/>
    <property type="project" value="TreeGrafter"/>
</dbReference>
<dbReference type="GO" id="GO:0009536">
    <property type="term" value="C:plastid"/>
    <property type="evidence" value="ECO:0007669"/>
    <property type="project" value="UniProtKB-SubCell"/>
</dbReference>
<dbReference type="GO" id="GO:0003735">
    <property type="term" value="F:structural constituent of ribosome"/>
    <property type="evidence" value="ECO:0007669"/>
    <property type="project" value="InterPro"/>
</dbReference>
<dbReference type="GO" id="GO:0006412">
    <property type="term" value="P:translation"/>
    <property type="evidence" value="ECO:0007669"/>
    <property type="project" value="InterPro"/>
</dbReference>
<dbReference type="CDD" id="cd01425">
    <property type="entry name" value="RPS2"/>
    <property type="match status" value="1"/>
</dbReference>
<dbReference type="Gene3D" id="3.40.50.10490">
    <property type="entry name" value="Glucose-6-phosphate isomerase like protein, domain 1"/>
    <property type="match status" value="1"/>
</dbReference>
<dbReference type="Gene3D" id="1.10.287.610">
    <property type="entry name" value="Helix hairpin bin"/>
    <property type="match status" value="1"/>
</dbReference>
<dbReference type="HAMAP" id="MF_00291_B">
    <property type="entry name" value="Ribosomal_uS2_B"/>
    <property type="match status" value="1"/>
</dbReference>
<dbReference type="InterPro" id="IPR001865">
    <property type="entry name" value="Ribosomal_uS2"/>
</dbReference>
<dbReference type="InterPro" id="IPR005706">
    <property type="entry name" value="Ribosomal_uS2_bac/mit/plastid"/>
</dbReference>
<dbReference type="InterPro" id="IPR018130">
    <property type="entry name" value="Ribosomal_uS2_CS"/>
</dbReference>
<dbReference type="InterPro" id="IPR023591">
    <property type="entry name" value="Ribosomal_uS2_flav_dom_sf"/>
</dbReference>
<dbReference type="NCBIfam" id="TIGR01011">
    <property type="entry name" value="rpsB_bact"/>
    <property type="match status" value="1"/>
</dbReference>
<dbReference type="PANTHER" id="PTHR12534">
    <property type="entry name" value="30S RIBOSOMAL PROTEIN S2 PROKARYOTIC AND ORGANELLAR"/>
    <property type="match status" value="1"/>
</dbReference>
<dbReference type="PANTHER" id="PTHR12534:SF0">
    <property type="entry name" value="SMALL RIBOSOMAL SUBUNIT PROTEIN US2M"/>
    <property type="match status" value="1"/>
</dbReference>
<dbReference type="Pfam" id="PF00318">
    <property type="entry name" value="Ribosomal_S2"/>
    <property type="match status" value="1"/>
</dbReference>
<dbReference type="PRINTS" id="PR00395">
    <property type="entry name" value="RIBOSOMALS2"/>
</dbReference>
<dbReference type="SUPFAM" id="SSF52313">
    <property type="entry name" value="Ribosomal protein S2"/>
    <property type="match status" value="1"/>
</dbReference>
<dbReference type="PROSITE" id="PS00962">
    <property type="entry name" value="RIBOSOMAL_S2_1"/>
    <property type="match status" value="1"/>
</dbReference>
<dbReference type="PROSITE" id="PS00963">
    <property type="entry name" value="RIBOSOMAL_S2_2"/>
    <property type="match status" value="1"/>
</dbReference>
<protein>
    <recommendedName>
        <fullName evidence="1">Small ribosomal subunit protein uS2c</fullName>
    </recommendedName>
    <alternativeName>
        <fullName>Plastid 30S ribosomal protein S2</fullName>
    </alternativeName>
</protein>
<accession>P24352</accession>
<feature type="chain" id="PRO_0000134289" description="Small ribosomal subunit protein uS2c">
    <location>
        <begin position="1"/>
        <end position="235"/>
    </location>
</feature>
<gene>
    <name type="primary">rps2</name>
</gene>